<sequence length="235" mass="25773">MKHEEANKEIGGRGAEGQRSKRVGGNSKIQNIQSPAPNPQPIVPNTQSPVPNLDNWLEIGKIVSPQGLSGELKVYPVSDFPERFEVPGKRWLLHLDGTEPQPIQLLTGRYISNKNLYVIKLAGVENCDQAEALRGCKLMVPASDRPQLAEDEYHVLDLIGLEVFMQASGELVGTVVDIIPAGNDLLEVKLHPSFTTDKKQKTVLIPFVEAIAPVVDLKSNRIEITPPPGLLEINN</sequence>
<gene>
    <name evidence="1" type="primary">rimM</name>
    <name type="ordered locus">Npun_F1948</name>
</gene>
<keyword id="KW-0143">Chaperone</keyword>
<keyword id="KW-0963">Cytoplasm</keyword>
<keyword id="KW-1185">Reference proteome</keyword>
<keyword id="KW-0690">Ribosome biogenesis</keyword>
<keyword id="KW-0698">rRNA processing</keyword>
<evidence type="ECO:0000255" key="1">
    <source>
        <dbReference type="HAMAP-Rule" id="MF_00014"/>
    </source>
</evidence>
<evidence type="ECO:0000256" key="2">
    <source>
        <dbReference type="SAM" id="MobiDB-lite"/>
    </source>
</evidence>
<protein>
    <recommendedName>
        <fullName evidence="1">Ribosome maturation factor RimM</fullName>
    </recommendedName>
</protein>
<organism>
    <name type="scientific">Nostoc punctiforme (strain ATCC 29133 / PCC 73102)</name>
    <dbReference type="NCBI Taxonomy" id="63737"/>
    <lineage>
        <taxon>Bacteria</taxon>
        <taxon>Bacillati</taxon>
        <taxon>Cyanobacteriota</taxon>
        <taxon>Cyanophyceae</taxon>
        <taxon>Nostocales</taxon>
        <taxon>Nostocaceae</taxon>
        <taxon>Nostoc</taxon>
    </lineage>
</organism>
<reference key="1">
    <citation type="journal article" date="2013" name="Plant Physiol.">
        <title>A Nostoc punctiforme Sugar Transporter Necessary to Establish a Cyanobacterium-Plant Symbiosis.</title>
        <authorList>
            <person name="Ekman M."/>
            <person name="Picossi S."/>
            <person name="Campbell E.L."/>
            <person name="Meeks J.C."/>
            <person name="Flores E."/>
        </authorList>
    </citation>
    <scope>NUCLEOTIDE SEQUENCE [LARGE SCALE GENOMIC DNA]</scope>
    <source>
        <strain>ATCC 29133 / PCC 73102</strain>
    </source>
</reference>
<comment type="function">
    <text evidence="1">An accessory protein needed during the final step in the assembly of 30S ribosomal subunit, possibly for assembly of the head region. Essential for efficient processing of 16S rRNA. May be needed both before and after RbfA during the maturation of 16S rRNA. It has affinity for free ribosomal 30S subunits but not for 70S ribosomes.</text>
</comment>
<comment type="subunit">
    <text evidence="1">Binds ribosomal protein uS19.</text>
</comment>
<comment type="subcellular location">
    <subcellularLocation>
        <location evidence="1">Cytoplasm</location>
    </subcellularLocation>
</comment>
<comment type="domain">
    <text evidence="1">The PRC barrel domain binds ribosomal protein uS19.</text>
</comment>
<comment type="similarity">
    <text evidence="1">Belongs to the RimM family.</text>
</comment>
<name>RIMM_NOSP7</name>
<dbReference type="EMBL" id="CP001037">
    <property type="protein sequence ID" value="ACC80600.1"/>
    <property type="molecule type" value="Genomic_DNA"/>
</dbReference>
<dbReference type="RefSeq" id="WP_012408615.1">
    <property type="nucleotide sequence ID" value="NC_010628.1"/>
</dbReference>
<dbReference type="SMR" id="B2J3X9"/>
<dbReference type="STRING" id="63737.Npun_F1948"/>
<dbReference type="EnsemblBacteria" id="ACC80600">
    <property type="protein sequence ID" value="ACC80600"/>
    <property type="gene ID" value="Npun_F1948"/>
</dbReference>
<dbReference type="KEGG" id="npu:Npun_F1948"/>
<dbReference type="eggNOG" id="COG0806">
    <property type="taxonomic scope" value="Bacteria"/>
</dbReference>
<dbReference type="HOGENOM" id="CLU_077636_3_0_3"/>
<dbReference type="OrthoDB" id="9810331at2"/>
<dbReference type="PhylomeDB" id="B2J3X9"/>
<dbReference type="Proteomes" id="UP000001191">
    <property type="component" value="Chromosome"/>
</dbReference>
<dbReference type="GO" id="GO:0005737">
    <property type="term" value="C:cytoplasm"/>
    <property type="evidence" value="ECO:0007669"/>
    <property type="project" value="UniProtKB-SubCell"/>
</dbReference>
<dbReference type="GO" id="GO:0005840">
    <property type="term" value="C:ribosome"/>
    <property type="evidence" value="ECO:0007669"/>
    <property type="project" value="InterPro"/>
</dbReference>
<dbReference type="GO" id="GO:0043022">
    <property type="term" value="F:ribosome binding"/>
    <property type="evidence" value="ECO:0007669"/>
    <property type="project" value="InterPro"/>
</dbReference>
<dbReference type="GO" id="GO:0042274">
    <property type="term" value="P:ribosomal small subunit biogenesis"/>
    <property type="evidence" value="ECO:0007669"/>
    <property type="project" value="UniProtKB-UniRule"/>
</dbReference>
<dbReference type="GO" id="GO:0006364">
    <property type="term" value="P:rRNA processing"/>
    <property type="evidence" value="ECO:0007669"/>
    <property type="project" value="UniProtKB-UniRule"/>
</dbReference>
<dbReference type="Gene3D" id="2.30.30.240">
    <property type="entry name" value="PRC-barrel domain"/>
    <property type="match status" value="1"/>
</dbReference>
<dbReference type="Gene3D" id="2.40.30.60">
    <property type="entry name" value="RimM"/>
    <property type="match status" value="1"/>
</dbReference>
<dbReference type="HAMAP" id="MF_00014">
    <property type="entry name" value="Ribosome_mat_RimM"/>
    <property type="match status" value="1"/>
</dbReference>
<dbReference type="InterPro" id="IPR011033">
    <property type="entry name" value="PRC_barrel-like_sf"/>
</dbReference>
<dbReference type="InterPro" id="IPR056792">
    <property type="entry name" value="PRC_RimM"/>
</dbReference>
<dbReference type="InterPro" id="IPR011961">
    <property type="entry name" value="RimM"/>
</dbReference>
<dbReference type="InterPro" id="IPR002676">
    <property type="entry name" value="RimM_N"/>
</dbReference>
<dbReference type="InterPro" id="IPR036976">
    <property type="entry name" value="RimM_N_sf"/>
</dbReference>
<dbReference type="InterPro" id="IPR009000">
    <property type="entry name" value="Transl_B-barrel_sf"/>
</dbReference>
<dbReference type="NCBIfam" id="TIGR02273">
    <property type="entry name" value="16S_RimM"/>
    <property type="match status" value="1"/>
</dbReference>
<dbReference type="PANTHER" id="PTHR33692">
    <property type="entry name" value="RIBOSOME MATURATION FACTOR RIMM"/>
    <property type="match status" value="1"/>
</dbReference>
<dbReference type="PANTHER" id="PTHR33692:SF1">
    <property type="entry name" value="RIBOSOME MATURATION FACTOR RIMM"/>
    <property type="match status" value="1"/>
</dbReference>
<dbReference type="Pfam" id="PF24986">
    <property type="entry name" value="PRC_RimM"/>
    <property type="match status" value="1"/>
</dbReference>
<dbReference type="Pfam" id="PF01782">
    <property type="entry name" value="RimM"/>
    <property type="match status" value="1"/>
</dbReference>
<dbReference type="SUPFAM" id="SSF50346">
    <property type="entry name" value="PRC-barrel domain"/>
    <property type="match status" value="1"/>
</dbReference>
<dbReference type="SUPFAM" id="SSF50447">
    <property type="entry name" value="Translation proteins"/>
    <property type="match status" value="1"/>
</dbReference>
<feature type="chain" id="PRO_0000351780" description="Ribosome maturation factor RimM">
    <location>
        <begin position="1"/>
        <end position="235"/>
    </location>
</feature>
<feature type="domain" description="PRC barrel" evidence="1">
    <location>
        <begin position="150"/>
        <end position="230"/>
    </location>
</feature>
<feature type="region of interest" description="Disordered" evidence="2">
    <location>
        <begin position="1"/>
        <end position="49"/>
    </location>
</feature>
<feature type="compositionally biased region" description="Basic and acidic residues" evidence="2">
    <location>
        <begin position="1"/>
        <end position="19"/>
    </location>
</feature>
<accession>B2J3X9</accession>
<proteinExistence type="inferred from homology"/>